<sequence length="304" mass="35278">MPQQLSPINIETKKAISDTRLKTLDIHYNESKPTTIQNTGKLVRINFKGGYISGGFLPNEYVLSTIHIYWGKEDDYGSNHLIDVYKYSGEINLVHWNKKKYSSYEEAKKHDDGIIIIAIFLQVSDHKNVYFQKIVNQLDSIRSANMSAPFDSVFYLDNLLPSTLDYFTYLGTTINHSADAAWIIFPTPINIHSDQLSKFRTLLSSSNHEGKPHYITENYRNPYKLNDDTQVYYSGEIIRAATTSPVRENYFMKWLSDLREACFSYYQKYIEGNKTFAIIAIVFVFILTAILFLMSQRYSREKQN</sequence>
<gene>
    <name type="primary">OPG105</name>
    <name type="ORF">E8L</name>
</gene>
<organism>
    <name type="scientific">Monkeypox virus (strain Zaire-96-I-16)</name>
    <name type="common">MPX</name>
    <dbReference type="NCBI Taxonomy" id="619591"/>
    <lineage>
        <taxon>Viruses</taxon>
        <taxon>Varidnaviria</taxon>
        <taxon>Bamfordvirae</taxon>
        <taxon>Nucleocytoviricota</taxon>
        <taxon>Pokkesviricetes</taxon>
        <taxon>Chitovirales</taxon>
        <taxon>Poxviridae</taxon>
        <taxon>Chordopoxvirinae</taxon>
        <taxon>Orthopoxvirus</taxon>
        <taxon>Monkeypox virus</taxon>
    </lineage>
</organism>
<dbReference type="EMBL" id="AF380138">
    <property type="protein sequence ID" value="AAL40563.1"/>
    <property type="molecule type" value="Genomic_DNA"/>
</dbReference>
<dbReference type="SMR" id="Q8V4Y0"/>
<dbReference type="KEGG" id="vg:929017"/>
<dbReference type="Proteomes" id="UP000101269">
    <property type="component" value="Genome"/>
</dbReference>
<dbReference type="GO" id="GO:0016020">
    <property type="term" value="C:membrane"/>
    <property type="evidence" value="ECO:0007669"/>
    <property type="project" value="UniProtKB-KW"/>
</dbReference>
<dbReference type="GO" id="GO:0019031">
    <property type="term" value="C:viral envelope"/>
    <property type="evidence" value="ECO:0007669"/>
    <property type="project" value="UniProtKB-KW"/>
</dbReference>
<dbReference type="GO" id="GO:0055036">
    <property type="term" value="C:virion membrane"/>
    <property type="evidence" value="ECO:0007669"/>
    <property type="project" value="UniProtKB-SubCell"/>
</dbReference>
<dbReference type="GO" id="GO:0004089">
    <property type="term" value="F:carbonate dehydratase activity"/>
    <property type="evidence" value="ECO:0007669"/>
    <property type="project" value="InterPro"/>
</dbReference>
<dbReference type="GO" id="GO:0008270">
    <property type="term" value="F:zinc ion binding"/>
    <property type="evidence" value="ECO:0007669"/>
    <property type="project" value="InterPro"/>
</dbReference>
<dbReference type="GO" id="GO:0046718">
    <property type="term" value="P:symbiont entry into host cell"/>
    <property type="evidence" value="ECO:0007669"/>
    <property type="project" value="UniProtKB-KW"/>
</dbReference>
<dbReference type="GO" id="GO:0019062">
    <property type="term" value="P:virion attachment to host cell"/>
    <property type="evidence" value="ECO:0007669"/>
    <property type="project" value="UniProtKB-KW"/>
</dbReference>
<dbReference type="Gene3D" id="3.10.200.10">
    <property type="entry name" value="Alpha carbonic anhydrase"/>
    <property type="match status" value="1"/>
</dbReference>
<dbReference type="InterPro" id="IPR001148">
    <property type="entry name" value="CA_dom"/>
</dbReference>
<dbReference type="InterPro" id="IPR036398">
    <property type="entry name" value="CA_dom_sf"/>
</dbReference>
<dbReference type="InterPro" id="IPR023561">
    <property type="entry name" value="Carbonic_anhydrase_a-class"/>
</dbReference>
<dbReference type="PANTHER" id="PTHR18952">
    <property type="entry name" value="CARBONIC ANHYDRASE"/>
    <property type="match status" value="1"/>
</dbReference>
<dbReference type="PANTHER" id="PTHR18952:SF124">
    <property type="entry name" value="CARBONIC ANHYDRASE 7"/>
    <property type="match status" value="1"/>
</dbReference>
<dbReference type="Pfam" id="PF00194">
    <property type="entry name" value="Carb_anhydrase"/>
    <property type="match status" value="1"/>
</dbReference>
<dbReference type="SMART" id="SM01057">
    <property type="entry name" value="Carb_anhydrase"/>
    <property type="match status" value="1"/>
</dbReference>
<dbReference type="SUPFAM" id="SSF51069">
    <property type="entry name" value="Carbonic anhydrase"/>
    <property type="match status" value="1"/>
</dbReference>
<dbReference type="PROSITE" id="PS51144">
    <property type="entry name" value="ALPHA_CA_2"/>
    <property type="match status" value="1"/>
</dbReference>
<feature type="chain" id="PRO_0000077446" description="Cell surface-binding protein OPG105">
    <location>
        <begin position="1"/>
        <end position="304"/>
    </location>
</feature>
<feature type="topological domain" description="Virion surface" evidence="3">
    <location>
        <begin position="1"/>
        <end position="275"/>
    </location>
</feature>
<feature type="transmembrane region" description="Helical" evidence="3">
    <location>
        <begin position="276"/>
        <end position="294"/>
    </location>
</feature>
<feature type="topological domain" description="Intravirion" evidence="3">
    <location>
        <begin position="295"/>
        <end position="304"/>
    </location>
</feature>
<feature type="domain" description="Alpha-carbonic anhydrase" evidence="4">
    <location>
        <begin position="1"/>
        <end position="235"/>
    </location>
</feature>
<feature type="disulfide bond" description="Interchain" evidence="1">
    <location>
        <position position="262"/>
    </location>
</feature>
<reference key="1">
    <citation type="journal article" date="2001" name="FEBS Lett.">
        <title>Human monkeypox and smallpox viruses: genomic comparison.</title>
        <authorList>
            <person name="Shchelkunov S.N."/>
            <person name="Totmenin A.V."/>
            <person name="Babkin I.V."/>
            <person name="Safronov P.F."/>
            <person name="Ryazankina O.I."/>
            <person name="Petrov N.A."/>
            <person name="Gutorov V.V."/>
            <person name="Uvarova E.A."/>
            <person name="Mikheev M.V."/>
            <person name="Sisler J.R."/>
            <person name="Esposito J.J."/>
            <person name="Jahrling P.B."/>
            <person name="Moss B."/>
            <person name="Sandakhchiev L.S."/>
        </authorList>
    </citation>
    <scope>NUCLEOTIDE SEQUENCE [LARGE SCALE GENOMIC DNA]</scope>
    <source>
        <strain>Zaire-96-I-16</strain>
    </source>
</reference>
<keyword id="KW-1015">Disulfide bond</keyword>
<keyword id="KW-0945">Host-virus interaction</keyword>
<keyword id="KW-0472">Membrane</keyword>
<keyword id="KW-0812">Transmembrane</keyword>
<keyword id="KW-1133">Transmembrane helix</keyword>
<keyword id="KW-1161">Viral attachment to host cell</keyword>
<keyword id="KW-0261">Viral envelope protein</keyword>
<keyword id="KW-0946">Virion</keyword>
<keyword id="KW-1160">Virus entry into host cell</keyword>
<accession>Q8V4Y0</accession>
<name>CAHH_MONPZ</name>
<protein>
    <recommendedName>
        <fullName>Cell surface-binding protein OPG105</fullName>
    </recommendedName>
    <alternativeName>
        <fullName>Carbonic anhydrase homolog</fullName>
    </alternativeName>
</protein>
<organismHost>
    <name type="scientific">Cynomys gunnisoni</name>
    <name type="common">Gunnison's prairie dog</name>
    <name type="synonym">Spermophilus gunnisoni</name>
    <dbReference type="NCBI Taxonomy" id="45479"/>
</organismHost>
<organismHost>
    <name type="scientific">Cynomys leucurus</name>
    <name type="common">White-tailed prairie dog</name>
    <dbReference type="NCBI Taxonomy" id="99825"/>
</organismHost>
<organismHost>
    <name type="scientific">Cynomys ludovicianus</name>
    <name type="common">Black-tailed prairie dog</name>
    <dbReference type="NCBI Taxonomy" id="45480"/>
</organismHost>
<organismHost>
    <name type="scientific">Cynomys mexicanus</name>
    <name type="common">Mexican prairie dog</name>
    <dbReference type="NCBI Taxonomy" id="99826"/>
</organismHost>
<organismHost>
    <name type="scientific">Cynomys parvidens</name>
    <name type="common">Utah prairie dog</name>
    <dbReference type="NCBI Taxonomy" id="99827"/>
</organismHost>
<organismHost>
    <name type="scientific">Gliridae</name>
    <name type="common">dormice</name>
    <dbReference type="NCBI Taxonomy" id="30650"/>
</organismHost>
<organismHost>
    <name type="scientific">Heliosciurus ruwenzorii</name>
    <name type="common">Ruwenzori sun squirrel</name>
    <dbReference type="NCBI Taxonomy" id="226685"/>
</organismHost>
<organismHost>
    <name type="scientific">Homo sapiens</name>
    <name type="common">Human</name>
    <dbReference type="NCBI Taxonomy" id="9606"/>
</organismHost>
<organismHost>
    <name type="scientific">Mus musculus</name>
    <name type="common">Mouse</name>
    <dbReference type="NCBI Taxonomy" id="10090"/>
</organismHost>
<comment type="function">
    <text evidence="1">Binds to chondroitin sulfate on the cell surface to provide virion attachment to target cell.</text>
</comment>
<comment type="subunit">
    <text evidence="2">Homodimer; disulfide-linked.</text>
</comment>
<comment type="subcellular location">
    <subcellularLocation>
        <location evidence="2">Virion membrane</location>
    </subcellularLocation>
    <text evidence="2">Component of the mature virion (MV) membrane.</text>
</comment>
<comment type="induction">
    <text>Expressed in the late phase of the viral replicative cycle.</text>
</comment>
<comment type="PTM">
    <text evidence="2">Apparently non-glycosylated.</text>
</comment>
<comment type="similarity">
    <text evidence="5">Belongs to the alpha-carbonic anhydrase family.</text>
</comment>
<proteinExistence type="evidence at transcript level"/>
<evidence type="ECO:0000250" key="1"/>
<evidence type="ECO:0000250" key="2">
    <source>
        <dbReference type="UniProtKB" id="P04195"/>
    </source>
</evidence>
<evidence type="ECO:0000255" key="3"/>
<evidence type="ECO:0000255" key="4">
    <source>
        <dbReference type="PROSITE-ProRule" id="PRU01134"/>
    </source>
</evidence>
<evidence type="ECO:0000305" key="5"/>